<sequence>MAGKAILKGKGGGPPRRVSKETAKKTRQSRVQMPNGLVLMRMMGILWHAVAGTARSPVLKSFWKSVPLKQATAALRKIKKAVSTLMVGLQRRGKRRSAVDWTGWLLVVVLLGVTLAATVRKERDGTTVIRAEGKDAATQVRVENGTCVILATDMGSWCDDSLTYECVTIDQGEEPVDVDCSCRNVDGVYLEYGRCGKQEGSRTRRSVLIPSHAQGDLTGRGHKWLEGDSLRTHLTRVEGWVWKNKVLTLAVIAVVWLTVESVVTRVAVVVVLLCLAPVYASRCTHLENRDFVTGTQGTTRVTLVLELGGCVTITAEGKPSMDVWLDSIYQENPAKTREYCLHAKLSDTKVAARCPTMGPATLAEEHQSGTVCKRDQSDRGWGNHCGLFGKGSIVTCVKASCEAKKKATGHVYDANKIVYTVKVEPHTGDYVAANETHSGRKTASFTVSSERTILTMGDYGDVSLLCRVASGVDLAQTVILELDKTSEHLPTAWQVHRDWFNDLALPWKHEGAQNWNNAERLVEFGAPHAVKMDVYNLGDQTGVLLKSLAGVPVAHIDGTKYHLKSGHVTCEVGLEKLKMKGLTYTMCDKTKFTWKRIPTDSGHDTVVMEVAFSGTKPCRIPVRAVAHGSPDVNVAMLMTPNPTIENNGGGFIEMQLPPGDNIIYVGELSHQWFQKGSSIGRVFQKTRKGIERLTVIGEHAWDFGSTGGFLTSVGKALHTVLGGAFNSLFGGVGFLPKILVGVVLAWLGLNMRNPTMSMSFLLAGGLVLAMTLGVGADVGCAVDTERMELRCGEGLVVWREVSEWYDNYAYYPETLGALASAIKETFEEGTCGIVPQNRLEMAMWRSSATELNLALVEGDANLTVVVDKLDPTDYRGGIPSLLKKGKDIKVSWKSWGHSMIWSVPEAPRLFMVGTEGSSECPLERRKTGVFTVAEFGVGLRTKVFLDFRQESTHECDTGVMGAAVKNGMAVHTDQSLWMKSVRNDTGTYIVELLVTDLRNCSWPASHTIDNAEVVDSELFLPASLAGPRSWYNRIPGYSEQVKGPWKYSPIRVTREECPGTRVTINADCDKRGASVRSTTESGKVIPEWCCRTCTLPPVTFRTGTDCWYAMEIRPVHDQGGLVRSMVVADNGELLSEGGIPGIVALFVVLEYVIRRRPATGTTAMWGGIVVLALLVTGLVKIESLVRYVVAVGITFHLELGPEIVALTLLQAVFELRVGLLSAFALRSNLTVREMVTIYFLLLVLELGLPSEGLGALWKWGDALAMGALIFRACTAEEKTGVGLLLMALMTQQDLATVHYGLMLFLGVASCCSIWKLIRGHREQKGLTWIVPLAGLLGGEGSGVRLVAFWELTVHGRRRSFSEPLTVVGVMLTLASGMIRHTSQEALCALAVASFLLLMLVLGTRKMQLVAEWSGCVEWHPELMNEGGEVSLRVRQDSMGNFHLTELEKEERVMAFWLLAGLAASAFHWSGILGVMGLWTLSEMLRTARRSGLVFSGQGGRERGDRPFEVKDGVYRIFSPGLLWGQRQVGVGYGSKGVLHTMWHVTRGAALSIDDAVAGPYWADVKEDVVCYGGAWSLEEKWKGETVQVHAFPPGRAHEVHQCQPGELLLDTGRRIGAVPIDLAKGTSGSPILNSQGVVVGLYGNGLKTNETYVSSIAQGEAEKSRPNLPPAVTGTGWTAKGQITVLDMHPGSGKTHRVLPELIRQCIDRRLRTLVLAPTRVVLKEMERALNGKRVRFHSPAVGDQQVGGSIVDVMCHATYVNRRLLPQGRQNWEVAIMDEAHWTDPHSIAARGHLYTLAKENKCALVLMTATPPGKSEPFPESNGAISSEEKQIPDGEWRDGFDWITEYEGRTAWFVPSSAKGGIIARTLIQKGKSVICLNSKTFEKDYSRVRDEKPDFVVTTDISEMGANLDVSRVIDGRTNIKPEEVDGRVELTGTRRVTTASAAQRRGRVGRQEGRTDEYIYSGQCDDDDSGLVQWKEAQILLDNITTLRGPVATFYGPEQDKMPEVAGHFRLTEEKRKHFRHLLTHCDFTPWLAWHVAANVSSVTSRNWTWEGPEENTVDEANGDLVTFRSPNGAERTLRPVWRDARMFREGRDIREFVAYASGRRSFGDVLSGMSGVPELLRHRCVSAMDVFYTLMHEEPGSRAMKMAERDAPEAFLTVVEMMVLGLATLGVVWCFVVRTSISRMMLGTLVLLASLALLWAGGVSYGNMAGVALIFYTLLTVLQPEAGKQRSSDDNKLAYFLLTLCSLAGLVAANEMGFLEKTKADLSTVLWSEHEELRSWEEWTNIDIQPARSWGTYVLVVSLFTPYIIHQLQTKIQQLVNSAVATGAQAMRDLGGGAPFFGVAGHVMALGVVSLVGATPTSLVVGVGLAAFHLAIVVSGLEAELTQRAHKVFFSAMVRNPMVDGDVINPFGEGEAKPALYERKMSLVLAIVLCLMSVVMNRTVPSTPRLLLWDWRQRDNCSNQRRTPFGRCQACGLSGVVRGSLWGFCPLGHRLWLRASGSRRGGSEGDTLGDLWKRKLNGCTKEEFFAYRRTGILETERDKARELLKRGETNMGLAVSRGTAKLAWLEERGYATLKGEVVDLGCGRGGWSYYAASRPAVMSVKACAIAGKGHETPKMVTSLGWNLIKFRAGMDVFSMQPHRADTIMCDIGESNPDAVVEGERTRKVILLMEQWKNRNPTATCVFKALAPYRPEVTEALHRFQLQWGGGLVRTPFSRNSTHEMYYSTAITGNIVNSVNIQSRKLLARFGDQRGPTRVPELDLGVGTRCVVLAEDKVKEKDVQERISALREQYGETWHMDREHPYRTWQYWAATACANRVGGALINGVVKLLSWPWNAREDVVRMAMTDTTAFGQQRVFKEKVDTKAQEPQPGTKVIMRAVNDWILERLARKSKPRMCSREEFIAKVKSNAALGAWSDEQNRWSSAKEAVEDPAFWQLVDEERERHLAGRCAHCVYNMMGKREKKLGEFGVAKGSRAIWYMWLGSRFLEFEALGFLNEDHWASRGSSGSGVEGISLNYLGWHLKGLSTLEGGLFYADDTAGWDTKVTNADLEDEEQLLRYMEGEHKQLAATIMQKAYHAKVVKVARPSRDGGCIMDVITRRDQRGSGQVVTYALNTLTNIKVQLIRMMEGEGVIEASDAHNPRLLRVERWLRDHGEERLGRMLVSGDDCVVRPVDDRFSGALYFLNDMAKTRKDIGEWDHSVGFSNWEEVPFCSHHFHELVMKDGRTLIVPCRDQDELVGRARVSPGCGRSVRETACLSKAYGQMWLLSYFHRRDLRTLGLAICSAVPVDWVPAGRTTWSIHASGAWMTTEDMLDVWNRVWILDNPFMHSKEKIAEWRDVPYLPKSHDMLCSSLVGRKERAEWAKNIWGAVEKVRKMIGQEKFKDYLSCMDRHDLHWESKLESSII</sequence>
<organismHost>
    <name type="scientific">Homo sapiens</name>
    <name type="common">Human</name>
    <dbReference type="NCBI Taxonomy" id="9606"/>
</organismHost>
<organismHost>
    <name type="scientific">Ixodes persulcatus</name>
    <name type="common">Taiga tick</name>
    <dbReference type="NCBI Taxonomy" id="34615"/>
</organismHost>
<organismHost>
    <name type="scientific">Ixodes ricinus</name>
    <name type="common">Common tick</name>
    <name type="synonym">Acarus ricinus</name>
    <dbReference type="NCBI Taxonomy" id="34613"/>
</organismHost>
<protein>
    <recommendedName>
        <fullName>Genome polyprotein</fullName>
    </recommendedName>
    <component>
        <recommendedName>
            <fullName>Peptide 2k</fullName>
        </recommendedName>
    </component>
    <component>
        <recommendedName>
            <fullName>Capsid protein C</fullName>
        </recommendedName>
        <alternativeName>
            <fullName>Core protein</fullName>
        </alternativeName>
    </component>
    <component>
        <recommendedName>
            <fullName>Protein prM</fullName>
        </recommendedName>
    </component>
    <component>
        <recommendedName>
            <fullName>Peptide pr</fullName>
        </recommendedName>
    </component>
    <component>
        <recommendedName>
            <fullName>Small envelope protein M</fullName>
        </recommendedName>
        <alternativeName>
            <fullName>Matrix protein</fullName>
        </alternativeName>
    </component>
    <component>
        <recommendedName>
            <fullName>Envelope protein E</fullName>
        </recommendedName>
    </component>
    <component>
        <recommendedName>
            <fullName>Non-structural protein 1</fullName>
            <shortName>NS1</shortName>
        </recommendedName>
    </component>
    <component>
        <recommendedName>
            <fullName>Non-structural protein 2A</fullName>
            <shortName>NS2A</shortName>
        </recommendedName>
    </component>
    <component>
        <recommendedName>
            <fullName>Serine protease subunit NS2B</fullName>
        </recommendedName>
        <alternativeName>
            <fullName>Flavivirin protease NS2B regulatory subunit</fullName>
        </alternativeName>
        <alternativeName>
            <fullName>Non-structural protein 2B</fullName>
        </alternativeName>
    </component>
    <component>
        <recommendedName>
            <fullName>Serine protease NS3</fullName>
            <ecNumber>3.4.21.91</ecNumber>
            <ecNumber>3.6.1.15</ecNumber>
            <ecNumber>3.6.4.13</ecNumber>
        </recommendedName>
        <alternativeName>
            <fullName>Flavivirin protease NS3 catalytic subunit</fullName>
        </alternativeName>
        <alternativeName>
            <fullName>Non-structural protein 3</fullName>
        </alternativeName>
    </component>
    <component>
        <recommendedName>
            <fullName>Non-structural protein 4A</fullName>
            <shortName>NS4A</shortName>
        </recommendedName>
    </component>
    <component>
        <recommendedName>
            <fullName>Non-structural protein 4B</fullName>
            <shortName>NS4B</shortName>
        </recommendedName>
    </component>
    <component>
        <recommendedName>
            <fullName>RNA-directed RNA polymerase NS5</fullName>
            <ecNumber evidence="17">2.1.1.56</ecNumber>
            <ecNumber evidence="17">2.1.1.57</ecNumber>
            <ecNumber evidence="12">2.7.7.48</ecNumber>
        </recommendedName>
        <alternativeName>
            <fullName>Non-structural protein 5</fullName>
        </alternativeName>
    </component>
</protein>
<keyword id="KW-0002">3D-structure</keyword>
<keyword id="KW-0007">Acetylation</keyword>
<keyword id="KW-1072">Activation of host autophagy by virus</keyword>
<keyword id="KW-0067">ATP-binding</keyword>
<keyword id="KW-0167">Capsid protein</keyword>
<keyword id="KW-1165">Clathrin-mediated endocytosis of virus by host</keyword>
<keyword id="KW-0165">Cleavage on pair of basic residues</keyword>
<keyword id="KW-1015">Disulfide bond</keyword>
<keyword id="KW-1170">Fusion of virus membrane with host endosomal membrane</keyword>
<keyword id="KW-1168">Fusion of virus membrane with host membrane</keyword>
<keyword id="KW-0325">Glycoprotein</keyword>
<keyword id="KW-0347">Helicase</keyword>
<keyword id="KW-1035">Host cytoplasm</keyword>
<keyword id="KW-1038">Host endoplasmic reticulum</keyword>
<keyword id="KW-1043">Host membrane</keyword>
<keyword id="KW-1048">Host nucleus</keyword>
<keyword id="KW-0945">Host-virus interaction</keyword>
<keyword id="KW-0378">Hydrolase</keyword>
<keyword id="KW-1090">Inhibition of host innate immune response by virus</keyword>
<keyword id="KW-1114">Inhibition of host interferon signaling pathway by virus</keyword>
<keyword id="KW-1105">Inhibition of host STAT1 by virus</keyword>
<keyword id="KW-1106">Inhibition of host STAT2 by virus</keyword>
<keyword id="KW-0922">Interferon antiviral system evasion</keyword>
<keyword id="KW-0472">Membrane</keyword>
<keyword id="KW-0479">Metal-binding</keyword>
<keyword id="KW-0489">Methyltransferase</keyword>
<keyword id="KW-0506">mRNA capping</keyword>
<keyword id="KW-0507">mRNA processing</keyword>
<keyword id="KW-0511">Multifunctional enzyme</keyword>
<keyword id="KW-0547">Nucleotide-binding</keyword>
<keyword id="KW-0548">Nucleotidyltransferase</keyword>
<keyword id="KW-0597">Phosphoprotein</keyword>
<keyword id="KW-0645">Protease</keyword>
<keyword id="KW-0694">RNA-binding</keyword>
<keyword id="KW-0696">RNA-directed RNA polymerase</keyword>
<keyword id="KW-0949">S-adenosyl-L-methionine</keyword>
<keyword id="KW-0964">Secreted</keyword>
<keyword id="KW-0720">Serine protease</keyword>
<keyword id="KW-0941">Suppressor of RNA silencing</keyword>
<keyword id="KW-0804">Transcription</keyword>
<keyword id="KW-0805">Transcription regulation</keyword>
<keyword id="KW-0808">Transferase</keyword>
<keyword id="KW-0812">Transmembrane</keyword>
<keyword id="KW-1133">Transmembrane helix</keyword>
<keyword id="KW-1161">Viral attachment to host cell</keyword>
<keyword id="KW-0261">Viral envelope protein</keyword>
<keyword id="KW-0899">Viral immunoevasion</keyword>
<keyword id="KW-1162">Viral penetration into host cytoplasm</keyword>
<keyword id="KW-0693">Viral RNA replication</keyword>
<keyword id="KW-0946">Virion</keyword>
<keyword id="KW-1164">Virus endocytosis by host</keyword>
<keyword id="KW-1160">Virus entry into host cell</keyword>
<keyword id="KW-0862">Zinc</keyword>
<reference key="1">
    <citation type="journal article" date="1990" name="Virology">
        <title>Nucleotide sequence of the genome and complete amino acid sequence of the polyprotein of tick-borne encephalitis virus.</title>
        <authorList>
            <person name="Pletnev A.G."/>
            <person name="Yamshchikov V.F."/>
            <person name="Blinov V.M."/>
        </authorList>
    </citation>
    <scope>NUCLEOTIDE SEQUENCE [GENOMIC RNA]</scope>
</reference>
<reference key="2">
    <citation type="journal article" date="1988" name="Nucleic Acids Res.">
        <title>Nucleotide sequence of the genome region encoding the structural proteins and the NS1 protein of the tick borne encephalitis virus.</title>
        <authorList>
            <person name="Yamshchikov V.F."/>
            <person name="Pletnev A.G."/>
        </authorList>
    </citation>
    <scope>NUCLEOTIDE SEQUENCE [GENOMIC RNA] OF 1-1190</scope>
</reference>
<reference key="3">
    <citation type="journal article" date="1986" name="FEBS Lett.">
        <title>Tick-borne encephalitis virus genome. The nucleotide sequence coding for virion structural proteins.</title>
        <authorList>
            <person name="Pletnev A.G."/>
            <person name="Yamshchikov V.F."/>
            <person name="Blinov V.M."/>
        </authorList>
    </citation>
    <scope>NUCLEOTIDE SEQUENCE [GENOMIC RNA] OF 1-683 AND 777-1002</scope>
</reference>
<reference key="4">
    <citation type="journal article" date="1987" name="Virology">
        <title>Studies on the glycosylation of flavivirus E proteins and the role of carbohydrate in antigenic structure.</title>
        <authorList>
            <person name="Winkler G."/>
            <person name="Heinz F.X."/>
            <person name="Kunz C."/>
        </authorList>
    </citation>
    <scope>GLYCOSYLATION (ENVELOPE PROTEIN E)</scope>
</reference>
<reference key="5">
    <citation type="journal article" date="2002" name="Cell">
        <title>Structure of dengue virus: implications for flavivirus organization, maturation, and fusion.</title>
        <authorList>
            <person name="Kuhn R.J."/>
            <person name="Zhang W."/>
            <person name="Rossmann M.G."/>
            <person name="Pletnev S.V."/>
            <person name="Corver J."/>
            <person name="Lenches E."/>
            <person name="Jones C.T."/>
            <person name="Mukhopadhyay S."/>
            <person name="Chipman P.R."/>
            <person name="Strauss E.G."/>
            <person name="Baker T.S."/>
            <person name="Strauss J.H."/>
        </authorList>
    </citation>
    <scope>STRUCTURE BY ELECTRON MICROSCOPY (24.0 ANGSTROMS) OF 281-675</scope>
</reference>
<comment type="function">
    <molecule>Capsid protein C</molecule>
    <text evidence="5">Plays a role in virus budding by binding to the cell membrane and gathering the viral RNA into a nucleocapsid that forms the core of a mature virus particle. During virus entry, may induce genome penetration into the host cytoplasm after hemifusion induced by the surface proteins. Can migrate to the cell nucleus where it modulates host functions.</text>
</comment>
<comment type="function">
    <molecule>Capsid protein C</molecule>
    <text evidence="1">Inhibits RNA silencing by interfering with host Dicer.</text>
</comment>
<comment type="function">
    <molecule>Peptide pr</molecule>
    <text evidence="5">Prevents premature fusion activity of envelope proteins in trans-Golgi by binding to envelope protein E at pH6.0. After virion release in extracellular space, gets dissociated from E dimers.</text>
</comment>
<comment type="function">
    <molecule>Protein prM</molecule>
    <text evidence="5">Acts as a chaperone for envelope protein E during intracellular virion assembly by masking and inactivating envelope protein E fusion peptide. prM is the only viral peptide matured by host furin in the trans-Golgi network probably to avoid catastrophic activation of the viral fusion activity in acidic Golgi compartment prior to virion release. prM-E cleavage is inefficient, and many virions are only partially matured. These uncleaved prM would play a role in immune evasion.</text>
</comment>
<comment type="function">
    <molecule>Small envelope protein M</molecule>
    <text evidence="5">May play a role in virus budding. Exerts cytotoxic effects by activating a mitochondrial apoptotic pathway through M ectodomain. May display a viroporin activity.</text>
</comment>
<comment type="function">
    <molecule>Envelope protein E</molecule>
    <text evidence="5">Binds to host cell surface receptor and mediates fusion between viral and cellular membranes. Envelope protein is synthesized in the endoplasmic reticulum in the form of heterodimer with protein prM. They play a role in virion budding in the ER, and the newly formed immature particle is covered with 60 spikes composed of heterodimer between precursor prM and envelope protein E. The virion is transported to the Golgi apparatus where the low pH causes dissociation of PrM-E heterodimers and formation of E homodimers. prM-E cleavage is inefficient, and many virions are only partially matured. These uncleaved prM would play a role in immune evasion.</text>
</comment>
<comment type="function">
    <molecule>Non-structural protein 1</molecule>
    <text evidence="9">Involved in immune evasion, pathogenesis and viral replication. Once cleaved off the polyprotein, is targeted to three destinations: the viral replication cycle, the plasma membrane and the extracellular compartment. Essential for viral replication. Required for formation of the replication complex and recruitment of other non-structural proteins to the ER-derived membrane structures. Excreted as a hexameric lipoparticle that plays a role against host immune response. Antagonizing the complement function. Binds to the host macrophages and dendritic cells. Inhibits signal transduction originating from Toll-like receptor 3 (TLR3).</text>
</comment>
<comment type="function">
    <molecule>Non-structural protein 2A</molecule>
    <text evidence="5">Component of the viral RNA replication complex that functions in virion assembly and antagonizes the host immune response.</text>
</comment>
<comment type="function">
    <molecule>Serine protease subunit NS2B</molecule>
    <text evidence="5 15">Required cofactor for the serine protease function of NS3 (By similarity). May have membrane-destabilizing activity and form viroporins (By similarity).</text>
</comment>
<comment type="function">
    <molecule>Serine protease NS3</molecule>
    <text evidence="16">Displays three enzymatic activities: serine protease, NTPase and RNA helicase. NS3 serine protease, in association with NS2B, performs its autocleavage and cleaves the polyprotein at dibasic sites in the cytoplasm: C-prM, NS2A-NS2B, NS2B-NS3, NS3-NS4A, NS4A-2K and NS4B-NS5. NS3 RNA helicase binds RNA and unwinds dsRNA in the 3' to 5' direction.</text>
</comment>
<comment type="function">
    <molecule>Non-structural protein 4A</molecule>
    <text evidence="9">Regulates the ATPase activity of the NS3 helicase activity. NS4A allows NS3 helicase to conserve energy during unwinding.</text>
</comment>
<comment type="function">
    <molecule>Peptide 2k</molecule>
    <text evidence="5">Functions as a signal peptide for NS4B and is required for the interferon antagonism activity of the latter.</text>
</comment>
<comment type="function">
    <molecule>Non-structural protein 4B</molecule>
    <text evidence="9">Induces the formation of ER-derived membrane vesicles where the viral replication takes place. Inhibits interferon (IFN)-induced host STAT1 phosphorylation and nuclear translocation, thereby preventing the establishment of cellular antiviral state by blocking the IFN-alpha/beta pathway. Inhibits STAT2 translocation in the nucleus after IFN-alpha treatment.</text>
</comment>
<comment type="function">
    <molecule>RNA-directed RNA polymerase NS5</molecule>
    <text evidence="5">Replicates the viral (+) and (-) genome, and performs the capping of genomes in the cytoplasm. NS5 methylates viral RNA cap at guanine N-7 and ribose 2'-O positions. Besides its role in RNA genome replication, also prevents the establishment of cellular antiviral state by blocking the interferon-alpha/beta (IFN-alpha/beta) signaling pathway. Inhibits host TYK2 and STAT2 phosphorylation, thereby preventing activation of JAK-STAT signaling pathway.</text>
</comment>
<comment type="catalytic activity">
    <reaction>
        <text>Selective hydrolysis of -Xaa-Xaa-|-Yaa- bonds in which each of the Xaa can be either Arg or Lys and Yaa can be either Ser or Ala.</text>
        <dbReference type="EC" id="3.4.21.91"/>
    </reaction>
</comment>
<comment type="catalytic activity">
    <reaction evidence="12">
        <text>RNA(n) + a ribonucleoside 5'-triphosphate = RNA(n+1) + diphosphate</text>
        <dbReference type="Rhea" id="RHEA:21248"/>
        <dbReference type="Rhea" id="RHEA-COMP:14527"/>
        <dbReference type="Rhea" id="RHEA-COMP:17342"/>
        <dbReference type="ChEBI" id="CHEBI:33019"/>
        <dbReference type="ChEBI" id="CHEBI:61557"/>
        <dbReference type="ChEBI" id="CHEBI:140395"/>
        <dbReference type="EC" id="2.7.7.48"/>
    </reaction>
</comment>
<comment type="catalytic activity">
    <reaction>
        <text>a ribonucleoside 5'-triphosphate + H2O = a ribonucleoside 5'-diphosphate + phosphate + H(+)</text>
        <dbReference type="Rhea" id="RHEA:23680"/>
        <dbReference type="ChEBI" id="CHEBI:15377"/>
        <dbReference type="ChEBI" id="CHEBI:15378"/>
        <dbReference type="ChEBI" id="CHEBI:43474"/>
        <dbReference type="ChEBI" id="CHEBI:57930"/>
        <dbReference type="ChEBI" id="CHEBI:61557"/>
        <dbReference type="EC" id="3.6.1.15"/>
    </reaction>
</comment>
<comment type="catalytic activity">
    <reaction>
        <text>ATP + H2O = ADP + phosphate + H(+)</text>
        <dbReference type="Rhea" id="RHEA:13065"/>
        <dbReference type="ChEBI" id="CHEBI:15377"/>
        <dbReference type="ChEBI" id="CHEBI:15378"/>
        <dbReference type="ChEBI" id="CHEBI:30616"/>
        <dbReference type="ChEBI" id="CHEBI:43474"/>
        <dbReference type="ChEBI" id="CHEBI:456216"/>
        <dbReference type="EC" id="3.6.4.13"/>
    </reaction>
</comment>
<comment type="catalytic activity">
    <reaction evidence="17">
        <text>a 5'-end (5'-triphosphoguanosine)-ribonucleoside in mRNA + S-adenosyl-L-methionine = a 5'-end (N(7)-methyl 5'-triphosphoguanosine)-ribonucleoside in mRNA + S-adenosyl-L-homocysteine</text>
        <dbReference type="Rhea" id="RHEA:67008"/>
        <dbReference type="Rhea" id="RHEA-COMP:17166"/>
        <dbReference type="Rhea" id="RHEA-COMP:17167"/>
        <dbReference type="ChEBI" id="CHEBI:57856"/>
        <dbReference type="ChEBI" id="CHEBI:59789"/>
        <dbReference type="ChEBI" id="CHEBI:156461"/>
        <dbReference type="ChEBI" id="CHEBI:167617"/>
        <dbReference type="EC" id="2.1.1.56"/>
    </reaction>
</comment>
<comment type="catalytic activity">
    <reaction evidence="17">
        <text>a 5'-end (N(7)-methyl 5'-triphosphoguanosine)-ribonucleoside in mRNA + S-adenosyl-L-methionine = a 5'-end (N(7)-methyl 5'-triphosphoguanosine)-(2'-O-methyl-ribonucleoside) in mRNA + S-adenosyl-L-homocysteine + H(+)</text>
        <dbReference type="Rhea" id="RHEA:67020"/>
        <dbReference type="Rhea" id="RHEA-COMP:17167"/>
        <dbReference type="Rhea" id="RHEA-COMP:17168"/>
        <dbReference type="ChEBI" id="CHEBI:15378"/>
        <dbReference type="ChEBI" id="CHEBI:57856"/>
        <dbReference type="ChEBI" id="CHEBI:59789"/>
        <dbReference type="ChEBI" id="CHEBI:156461"/>
        <dbReference type="ChEBI" id="CHEBI:167609"/>
        <dbReference type="EC" id="2.1.1.57"/>
    </reaction>
</comment>
<comment type="subunit">
    <molecule>Capsid protein C</molecule>
    <text evidence="5">Homodimer (By similarity). Interacts (via N-terminus) with host EXOC1 (via C-terminus); this interaction results in EXOC1 degradation through the proteasome degradation pathway (By similarity).</text>
</comment>
<comment type="subunit">
    <molecule>Protein prM</molecule>
    <text evidence="5">Forms heterodimers with envelope protein E in the endoplasmic reticulum and Golgi.</text>
</comment>
<comment type="subunit">
    <molecule>Envelope protein E</molecule>
    <text evidence="5">Homodimer; in the endoplasmic reticulum and Golgi (By similarity). Interacts with protein prM (By similarity). Interacts with non-structural protein 1 (By similarity).</text>
</comment>
<comment type="subunit">
    <molecule>Non-structural protein 1</molecule>
    <text evidence="5">Homodimer; Homohexamer when secreted. Interacts with envelope protein E.</text>
</comment>
<comment type="subunit">
    <molecule>Non-structural protein 2A</molecule>
    <text evidence="1">Interacts (via N-terminus) with serine protease NS3.</text>
</comment>
<comment type="subunit">
    <molecule>Serine protease subunit NS2B</molecule>
    <text evidence="5">Forms a heterodimer with serine protease NS3 (By similarity). May form homooligomers (By similarity).</text>
</comment>
<comment type="subunit">
    <molecule>Serine protease NS3</molecule>
    <text evidence="5">Forms a heterodimer with NS2B (By similarity). Interacts with non-structural protein 2A (via N-terminus) (By similarity). Interacts with NS4B (By similarity). Interacts with unphosphorylated RNA-directed RNA polymerase NS5; this interaction stimulates RNA-directed RNA polymerase NS5 guanylyltransferase activity (By similarity).</text>
</comment>
<comment type="subunit">
    <molecule>Non-structural protein 4B</molecule>
    <text evidence="5">Interacts with serine protease NS3 (By similarity). Interacts with NS1 (By similarity).</text>
</comment>
<comment type="subunit">
    <molecule>RNA-directed RNA polymerase NS5</molecule>
    <text evidence="6">Homodimer. Interacts with host STAT2; this interaction inhibits the phosphorylation of the latter, and, when all viral proteins are present (polyprotein), targets STAT2 for degradation. Interacts with serine protease NS3. Interacts with host SCRIB; this interaction targets NS5 to the cell membrane periphery and nucleus, thereby allowing efficient host nuclear STAT1 inhibition.</text>
</comment>
<comment type="subcellular location">
    <molecule>Capsid protein C</molecule>
    <subcellularLocation>
        <location evidence="5">Virion</location>
    </subcellularLocation>
    <subcellularLocation>
        <location evidence="5">Host nucleus</location>
    </subcellularLocation>
    <subcellularLocation>
        <location evidence="5">Host cytoplasm</location>
        <location evidence="5">Host perinuclear region</location>
    </subcellularLocation>
    <subcellularLocation>
        <location evidence="5">Host cytoplasm</location>
    </subcellularLocation>
</comment>
<comment type="subcellular location">
    <molecule>Peptide pr</molecule>
    <subcellularLocation>
        <location evidence="5">Secreted</location>
    </subcellularLocation>
</comment>
<comment type="subcellular location">
    <molecule>Small envelope protein M</molecule>
    <subcellularLocation>
        <location evidence="1">Virion membrane</location>
        <topology evidence="1">Multi-pass membrane protein</topology>
    </subcellularLocation>
    <subcellularLocation>
        <location evidence="1">Host endoplasmic reticulum membrane</location>
        <topology evidence="10">Multi-pass membrane protein</topology>
    </subcellularLocation>
    <text evidence="1">ER membrane retention is mediated by the transmembrane domains.</text>
</comment>
<comment type="subcellular location">
    <molecule>Envelope protein E</molecule>
    <subcellularLocation>
        <location evidence="20">Virion membrane</location>
        <topology evidence="1">Multi-pass membrane protein</topology>
    </subcellularLocation>
    <subcellularLocation>
        <location evidence="1">Host endoplasmic reticulum membrane</location>
        <topology evidence="10">Multi-pass membrane protein</topology>
    </subcellularLocation>
    <text evidence="1">ER membrane retention is mediated by the transmembrane domains.</text>
</comment>
<comment type="subcellular location">
    <molecule>Non-structural protein 1</molecule>
    <subcellularLocation>
        <location evidence="5">Secreted</location>
    </subcellularLocation>
    <subcellularLocation>
        <location>Host endoplasmic reticulum membrane</location>
        <topology>Peripheral membrane protein</topology>
        <orientation evidence="5">Lumenal side</orientation>
    </subcellularLocation>
    <text evidence="9">Located in RE-derived vesicles hosting the replication complex.</text>
</comment>
<comment type="subcellular location">
    <molecule>Non-structural protein 2A</molecule>
    <subcellularLocation>
        <location evidence="3">Host endoplasmic reticulum membrane</location>
        <topology evidence="5">Multi-pass membrane protein</topology>
    </subcellularLocation>
</comment>
<comment type="subcellular location">
    <molecule>Serine protease subunit NS2B</molecule>
    <subcellularLocation>
        <location>Host endoplasmic reticulum membrane</location>
        <topology evidence="5">Multi-pass membrane protein</topology>
    </subcellularLocation>
</comment>
<comment type="subcellular location">
    <molecule>Serine protease NS3</molecule>
    <subcellularLocation>
        <location evidence="16">Host endoplasmic reticulum membrane</location>
        <topology evidence="16">Peripheral membrane protein</topology>
        <orientation evidence="16">Cytoplasmic side</orientation>
    </subcellularLocation>
    <text evidence="16">Remains non-covalently associated to serine protease subunit NS2B.</text>
</comment>
<comment type="subcellular location">
    <molecule>Non-structural protein 4A</molecule>
    <subcellularLocation>
        <location evidence="3">Host endoplasmic reticulum membrane</location>
        <topology evidence="5">Multi-pass membrane protein</topology>
    </subcellularLocation>
    <text evidence="5">Located in RE-associated vesicles hosting the replication complex.</text>
</comment>
<comment type="subcellular location">
    <molecule>Non-structural protein 4B</molecule>
    <subcellularLocation>
        <location evidence="5">Host endoplasmic reticulum membrane</location>
        <topology evidence="5">Multi-pass membrane protein</topology>
    </subcellularLocation>
    <text evidence="9">Located in RE-derived vesicles hosting the replication complex.</text>
</comment>
<comment type="subcellular location">
    <molecule>RNA-directed RNA polymerase NS5</molecule>
    <subcellularLocation>
        <location>Host endoplasmic reticulum membrane</location>
        <topology>Peripheral membrane protein</topology>
        <orientation>Cytoplasmic side</orientation>
    </subcellularLocation>
    <subcellularLocation>
        <location evidence="2">Host nucleus</location>
    </subcellularLocation>
    <text evidence="5">Located in RE-associated vesicles hosting the replication complex. NS5 protein is mainly localized in the nucleus rather than in ER vesicles.</text>
</comment>
<comment type="domain">
    <text evidence="5">The transmembrane domains of the small envelope protein M and envelope protein E contain an endoplasmic reticulum retention signal.</text>
</comment>
<comment type="PTM">
    <molecule>Genome polyprotein</molecule>
    <text evidence="5">Specific enzymatic cleavages in vivo yield mature proteins. Cleavages in the lumen of endoplasmic reticulum are performed by host signal peptidase, whereas cleavages in the cytoplasmic side are performed by serine protease NS3. Signal cleavage at the 2K-4B site requires a prior NS3 protease-mediated cleavage at the 4A-2K site.</text>
</comment>
<comment type="PTM">
    <molecule>Protein prM</molecule>
    <text evidence="5">Cleaved in post-Golgi vesicles by a host furin, releasing the mature small envelope protein M, and peptide pr. This cleavage is incomplete as up to 30% of viral particles still carry uncleaved prM.</text>
</comment>
<comment type="PTM">
    <molecule>Envelope protein E</molecule>
    <text evidence="19">N-glycosylated.</text>
</comment>
<comment type="PTM">
    <molecule>Non-structural protein 1</molecule>
    <text evidence="5">N-glycosylated. The excreted form is glycosylated and this is required for efficient secretion of the protein from infected cells.</text>
</comment>
<comment type="PTM">
    <molecule>Serine protease NS3</molecule>
    <text evidence="7">Acetylated by host KAT5. Acetylation modulates NS3 RNA-binding and unwinding activities and plays an important positive role for viral replication.</text>
</comment>
<comment type="PTM">
    <molecule>RNA-directed RNA polymerase NS5</molecule>
    <text evidence="5">Phosphorylated on serines residues. This phosphorylation may trigger NS5 nuclear localization.</text>
</comment>
<comment type="similarity">
    <text evidence="17">In the N-terminal section; belongs to the class I-like SAM-binding methyltransferase superfamily. mRNA cap 0-1 NS5-type methyltransferase family.</text>
</comment>
<comment type="online information" name="Virus Particle ExploreR db">
    <link uri="https://viperdb.org/Info_Page.php?VDB=1k4r"/>
    <text>Icosahedral capsid structure</text>
</comment>
<proteinExistence type="evidence at protein level"/>
<feature type="chain" id="PRO_0000405171" description="Genome polyprotein">
    <location>
        <begin position="1"/>
        <end position="3412"/>
    </location>
</feature>
<feature type="chain" id="PRO_0000037804" description="Capsid protein C" evidence="1">
    <location>
        <begin position="1"/>
        <end position="96"/>
    </location>
</feature>
<feature type="propeptide" id="PRO_0000405172" description="ER anchor for the capsid protein C, removed in mature form by serine protease NS3" evidence="1">
    <location>
        <begin position="97"/>
        <end position="117"/>
    </location>
</feature>
<feature type="chain" id="PRO_0000405173" description="Protein prM" evidence="2">
    <location>
        <begin position="118"/>
        <end position="280"/>
    </location>
</feature>
<feature type="chain" id="PRO_0000037805" description="Peptide pr" evidence="2">
    <location>
        <begin position="118"/>
        <end position="205"/>
    </location>
</feature>
<feature type="chain" id="PRO_0000037806" description="Small envelope protein M" evidence="2">
    <location>
        <begin position="206"/>
        <end position="280"/>
    </location>
</feature>
<feature type="chain" id="PRO_0000037807" description="Envelope protein E" evidence="2">
    <location>
        <begin position="281"/>
        <end position="776"/>
    </location>
</feature>
<feature type="chain" id="PRO_0000037808" description="Non-structural protein 1" evidence="1">
    <location>
        <begin position="777"/>
        <end position="1128"/>
    </location>
</feature>
<feature type="chain" id="PRO_0000037809" description="Non-structural protein 2A" evidence="2">
    <location>
        <begin position="1129"/>
        <end position="1358"/>
    </location>
</feature>
<feature type="chain" id="PRO_0000037810" description="Serine protease subunit NS2B" evidence="1">
    <location>
        <begin position="1359"/>
        <end position="1489"/>
    </location>
</feature>
<feature type="chain" id="PRO_0000037811" description="Serine protease NS3" evidence="1">
    <location>
        <begin position="1490"/>
        <end position="2110"/>
    </location>
</feature>
<feature type="chain" id="PRO_0000037812" description="Non-structural protein 4A" evidence="1">
    <location>
        <begin position="2111"/>
        <end position="2236"/>
    </location>
</feature>
<feature type="peptide" id="PRO_0000405174" description="Peptide 2k" evidence="1">
    <location>
        <begin position="2237"/>
        <end position="2259"/>
    </location>
</feature>
<feature type="chain" id="PRO_0000037813" description="Non-structural protein 4B" evidence="1">
    <location>
        <begin position="2260"/>
        <end position="2510"/>
    </location>
</feature>
<feature type="chain" id="PRO_0000037814" description="RNA-directed RNA polymerase NS5" evidence="1">
    <location>
        <begin position="2511"/>
        <end position="3412"/>
    </location>
</feature>
<feature type="topological domain" description="Cytoplasmic" evidence="10">
    <location>
        <begin position="1"/>
        <end position="98"/>
    </location>
</feature>
<feature type="transmembrane region" description="Helical" evidence="10">
    <location>
        <begin position="99"/>
        <end position="119"/>
    </location>
</feature>
<feature type="topological domain" description="Extracellular" evidence="10">
    <location>
        <begin position="120"/>
        <end position="242"/>
    </location>
</feature>
<feature type="transmembrane region" description="Helical" evidence="10">
    <location>
        <begin position="243"/>
        <end position="260"/>
    </location>
</feature>
<feature type="topological domain" description="Cytoplasmic" evidence="10">
    <location>
        <position position="261"/>
    </location>
</feature>
<feature type="transmembrane region" description="Helical" evidence="10">
    <location>
        <begin position="262"/>
        <end position="280"/>
    </location>
</feature>
<feature type="topological domain" description="Extracellular" evidence="10">
    <location>
        <begin position="281"/>
        <end position="727"/>
    </location>
</feature>
<feature type="transmembrane region" description="Helical" evidence="10">
    <location>
        <begin position="728"/>
        <end position="748"/>
    </location>
</feature>
<feature type="topological domain" description="Cytoplasmic" evidence="10">
    <location>
        <begin position="749"/>
        <end position="755"/>
    </location>
</feature>
<feature type="transmembrane region" description="Helical" evidence="20">
    <location>
        <begin position="756"/>
        <end position="776"/>
    </location>
</feature>
<feature type="topological domain" description="Extracellular" evidence="10">
    <location>
        <begin position="777"/>
        <end position="1187"/>
    </location>
</feature>
<feature type="transmembrane region" description="Helical" evidence="10">
    <location>
        <begin position="1188"/>
        <end position="1208"/>
    </location>
</feature>
<feature type="topological domain" description="Cytoplasmic" evidence="10">
    <location>
        <begin position="1209"/>
        <end position="1236"/>
    </location>
</feature>
<feature type="transmembrane region" description="Helical" evidence="5 10">
    <location>
        <begin position="1237"/>
        <end position="1257"/>
    </location>
</feature>
<feature type="topological domain" description="Lumenal" evidence="5 10">
    <location>
        <begin position="1258"/>
        <end position="1293"/>
    </location>
</feature>
<feature type="transmembrane region" description="Helical" evidence="5 10">
    <location>
        <begin position="1294"/>
        <end position="1314"/>
    </location>
</feature>
<feature type="topological domain" description="Cytoplasmic" evidence="5 10">
    <location>
        <begin position="1315"/>
        <end position="1327"/>
    </location>
</feature>
<feature type="transmembrane region" description="Helical" evidence="5 10">
    <location>
        <begin position="1328"/>
        <end position="1348"/>
    </location>
</feature>
<feature type="topological domain" description="Cytoplasmic" evidence="5 10">
    <location>
        <begin position="1349"/>
        <end position="1359"/>
    </location>
</feature>
<feature type="transmembrane region" description="Helical" evidence="10">
    <location>
        <begin position="1360"/>
        <end position="1378"/>
    </location>
</feature>
<feature type="topological domain" description="Lumenal" evidence="10">
    <location>
        <begin position="1379"/>
        <end position="1382"/>
    </location>
</feature>
<feature type="transmembrane region" description="Helical" evidence="10">
    <location>
        <begin position="1383"/>
        <end position="1403"/>
    </location>
</feature>
<feature type="topological domain" description="Cytoplasmic" evidence="10">
    <location>
        <begin position="1404"/>
        <end position="1454"/>
    </location>
</feature>
<feature type="intramembrane region" description="Helical" evidence="10">
    <location>
        <begin position="1455"/>
        <end position="1475"/>
    </location>
</feature>
<feature type="topological domain" description="Cytoplasmic" evidence="10">
    <location>
        <begin position="1476"/>
        <end position="2160"/>
    </location>
</feature>
<feature type="transmembrane region" description="Helical" evidence="10">
    <location>
        <begin position="2161"/>
        <end position="2181"/>
    </location>
</feature>
<feature type="topological domain" description="Lumenal" evidence="10">
    <location>
        <begin position="2182"/>
        <end position="2189"/>
    </location>
</feature>
<feature type="intramembrane region" description="Helical" evidence="10">
    <location>
        <begin position="2190"/>
        <end position="2210"/>
    </location>
</feature>
<feature type="topological domain" description="Lumenal" evidence="10">
    <location>
        <position position="2211"/>
    </location>
</feature>
<feature type="transmembrane region" description="Helical" evidence="10">
    <location>
        <begin position="2212"/>
        <end position="2232"/>
    </location>
</feature>
<feature type="topological domain" description="Cytoplasmic" evidence="10">
    <location>
        <begin position="2233"/>
        <end position="2244"/>
    </location>
</feature>
<feature type="transmembrane region" description="Helical; Note=Signal for NS4B" evidence="10">
    <location>
        <begin position="2245"/>
        <end position="2265"/>
    </location>
</feature>
<feature type="topological domain" description="Lumenal" evidence="10">
    <location>
        <begin position="2266"/>
        <end position="2299"/>
    </location>
</feature>
<feature type="intramembrane region" description="Helical" evidence="10">
    <location>
        <begin position="2300"/>
        <end position="2320"/>
    </location>
</feature>
<feature type="topological domain" description="Lumenal" evidence="10">
    <location>
        <begin position="2321"/>
        <end position="2343"/>
    </location>
</feature>
<feature type="intramembrane region" description="Helical" evidence="10">
    <location>
        <begin position="2344"/>
        <end position="2364"/>
    </location>
</feature>
<feature type="topological domain" description="Lumenal" evidence="10">
    <location>
        <begin position="2365"/>
        <end position="2368"/>
    </location>
</feature>
<feature type="transmembrane region" description="Helical" evidence="10">
    <location>
        <begin position="2369"/>
        <end position="2389"/>
    </location>
</feature>
<feature type="topological domain" description="Cytoplasmic" evidence="10">
    <location>
        <begin position="2390"/>
        <end position="2430"/>
    </location>
</feature>
<feature type="transmembrane region" description="Helical" evidence="10">
    <location>
        <begin position="2431"/>
        <end position="2451"/>
    </location>
</feature>
<feature type="topological domain" description="Lumenal" evidence="10">
    <location>
        <begin position="2452"/>
        <end position="2476"/>
    </location>
</feature>
<feature type="transmembrane region" description="Helical" evidence="10">
    <location>
        <begin position="2477"/>
        <end position="2497"/>
    </location>
</feature>
<feature type="topological domain" description="Cytoplasmic" evidence="10">
    <location>
        <begin position="2498"/>
        <end position="3412"/>
    </location>
</feature>
<feature type="domain" description="Peptidase S7" evidence="16">
    <location>
        <begin position="1490"/>
        <end position="1669"/>
    </location>
</feature>
<feature type="domain" description="Helicase ATP-binding" evidence="13">
    <location>
        <begin position="1675"/>
        <end position="1831"/>
    </location>
</feature>
<feature type="domain" description="Helicase C-terminal" evidence="14">
    <location>
        <begin position="1841"/>
        <end position="2000"/>
    </location>
</feature>
<feature type="domain" description="mRNA cap 0-1 NS5-type MT" evidence="17">
    <location>
        <begin position="2511"/>
        <end position="2775"/>
    </location>
</feature>
<feature type="domain" description="RdRp catalytic" evidence="12">
    <location>
        <begin position="3038"/>
        <end position="3187"/>
    </location>
</feature>
<feature type="region of interest" description="Disordered" evidence="18">
    <location>
        <begin position="1"/>
        <end position="30"/>
    </location>
</feature>
<feature type="region of interest" description="Fusion peptide" evidence="4">
    <location>
        <begin position="378"/>
        <end position="391"/>
    </location>
</feature>
<feature type="region of interest" description="Interacts with and activates NS3 protease" evidence="15">
    <location>
        <begin position="1410"/>
        <end position="1449"/>
    </location>
</feature>
<feature type="region of interest" description="Interaction with host SCRIB" evidence="6">
    <location>
        <begin position="2729"/>
        <end position="2733"/>
    </location>
</feature>
<feature type="short sequence motif" description="DEAH box" evidence="13">
    <location>
        <begin position="1779"/>
        <end position="1782"/>
    </location>
</feature>
<feature type="active site" description="Charge relay system; for serine protease NS3 activity" evidence="16">
    <location>
        <position position="1543"/>
    </location>
</feature>
<feature type="active site" description="Charge relay system; for serine protease NS3 activity" evidence="16">
    <location>
        <position position="1567"/>
    </location>
</feature>
<feature type="active site" description="Charge relay system; for serine protease NS3 activity" evidence="16">
    <location>
        <position position="1627"/>
    </location>
</feature>
<feature type="active site" description="For 2'-O-MTase activity" evidence="8">
    <location>
        <position position="2571"/>
    </location>
</feature>
<feature type="active site" description="For 2'-O-MTase activity" evidence="8">
    <location>
        <position position="2656"/>
    </location>
</feature>
<feature type="active site" description="For 2'-O-MTase activity" evidence="8">
    <location>
        <position position="2693"/>
    </location>
</feature>
<feature type="active site" description="For 2'-O-MTase activity" evidence="8">
    <location>
        <position position="2729"/>
    </location>
</feature>
<feature type="binding site" evidence="13">
    <location>
        <begin position="1688"/>
        <end position="1695"/>
    </location>
    <ligand>
        <name>ATP</name>
        <dbReference type="ChEBI" id="CHEBI:30616"/>
    </ligand>
</feature>
<feature type="binding site" evidence="17">
    <location>
        <position position="2566"/>
    </location>
    <ligand>
        <name>S-adenosyl-L-methionine</name>
        <dbReference type="ChEBI" id="CHEBI:59789"/>
    </ligand>
</feature>
<feature type="binding site" evidence="17">
    <location>
        <position position="2596"/>
    </location>
    <ligand>
        <name>S-adenosyl-L-methionine</name>
        <dbReference type="ChEBI" id="CHEBI:59789"/>
    </ligand>
</feature>
<feature type="binding site" evidence="17">
    <location>
        <position position="2597"/>
    </location>
    <ligand>
        <name>S-adenosyl-L-methionine</name>
        <dbReference type="ChEBI" id="CHEBI:59789"/>
    </ligand>
</feature>
<feature type="binding site" evidence="17">
    <location>
        <position position="2615"/>
    </location>
    <ligand>
        <name>S-adenosyl-L-methionine</name>
        <dbReference type="ChEBI" id="CHEBI:59789"/>
    </ligand>
</feature>
<feature type="binding site" evidence="17">
    <location>
        <position position="2641"/>
    </location>
    <ligand>
        <name>S-adenosyl-L-methionine</name>
        <dbReference type="ChEBI" id="CHEBI:59789"/>
    </ligand>
</feature>
<feature type="binding site" evidence="17">
    <location>
        <position position="2642"/>
    </location>
    <ligand>
        <name>S-adenosyl-L-methionine</name>
        <dbReference type="ChEBI" id="CHEBI:59789"/>
    </ligand>
</feature>
<feature type="binding site" evidence="17">
    <location>
        <position position="2657"/>
    </location>
    <ligand>
        <name>S-adenosyl-L-methionine</name>
        <dbReference type="ChEBI" id="CHEBI:59789"/>
    </ligand>
</feature>
<feature type="binding site" evidence="17">
    <location>
        <position position="2731"/>
    </location>
    <ligand>
        <name>S-adenosyl-L-methionine</name>
        <dbReference type="ChEBI" id="CHEBI:59789"/>
    </ligand>
</feature>
<feature type="binding site" evidence="3">
    <location>
        <position position="2948"/>
    </location>
    <ligand>
        <name>Zn(2+)</name>
        <dbReference type="ChEBI" id="CHEBI:29105"/>
        <label>1</label>
    </ligand>
</feature>
<feature type="binding site" evidence="3">
    <location>
        <position position="2952"/>
    </location>
    <ligand>
        <name>Zn(2+)</name>
        <dbReference type="ChEBI" id="CHEBI:29105"/>
        <label>1</label>
    </ligand>
</feature>
<feature type="binding site" evidence="3">
    <location>
        <position position="2957"/>
    </location>
    <ligand>
        <name>Zn(2+)</name>
        <dbReference type="ChEBI" id="CHEBI:29105"/>
        <label>1</label>
    </ligand>
</feature>
<feature type="binding site" evidence="3">
    <location>
        <position position="2960"/>
    </location>
    <ligand>
        <name>Zn(2+)</name>
        <dbReference type="ChEBI" id="CHEBI:29105"/>
        <label>1</label>
    </ligand>
</feature>
<feature type="binding site" evidence="3">
    <location>
        <position position="3222"/>
    </location>
    <ligand>
        <name>Zn(2+)</name>
        <dbReference type="ChEBI" id="CHEBI:29105"/>
        <label>2</label>
    </ligand>
</feature>
<feature type="binding site" evidence="3">
    <location>
        <position position="3238"/>
    </location>
    <ligand>
        <name>Zn(2+)</name>
        <dbReference type="ChEBI" id="CHEBI:29105"/>
        <label>2</label>
    </ligand>
</feature>
<feature type="binding site" evidence="3">
    <location>
        <position position="3357"/>
    </location>
    <ligand>
        <name>Zn(2+)</name>
        <dbReference type="ChEBI" id="CHEBI:29105"/>
        <label>2</label>
    </ligand>
</feature>
<feature type="site" description="Cleavage; by viral protease NS3" evidence="1">
    <location>
        <begin position="96"/>
        <end position="97"/>
    </location>
</feature>
<feature type="site" description="Cleavage; by host signal peptidase" evidence="1">
    <location>
        <begin position="117"/>
        <end position="118"/>
    </location>
</feature>
<feature type="site" description="Cleavage; by host furin" evidence="2">
    <location>
        <begin position="205"/>
        <end position="206"/>
    </location>
</feature>
<feature type="site" description="Cleavage; by host signal peptidase" evidence="2">
    <location>
        <begin position="280"/>
        <end position="281"/>
    </location>
</feature>
<feature type="site" description="Cleavage; by host signal peptidase" evidence="1">
    <location>
        <begin position="776"/>
        <end position="777"/>
    </location>
</feature>
<feature type="site" description="Cleavage; by host" evidence="2">
    <location>
        <begin position="1128"/>
        <end position="1129"/>
    </location>
</feature>
<feature type="site" description="Cleavage; by viral protease NS3" evidence="2">
    <location>
        <begin position="1358"/>
        <end position="1359"/>
    </location>
</feature>
<feature type="site" description="Cleavage; by autolysis" evidence="1">
    <location>
        <begin position="1489"/>
        <end position="1490"/>
    </location>
</feature>
<feature type="site" description="Involved in NS3 ATPase and RTPase activities" evidence="3">
    <location>
        <position position="1949"/>
    </location>
</feature>
<feature type="site" description="Involved in NS3 ATPase and RTPase activities" evidence="3">
    <location>
        <position position="1952"/>
    </location>
</feature>
<feature type="site" description="Cleavage; by autolysis" evidence="1">
    <location>
        <begin position="2110"/>
        <end position="2111"/>
    </location>
</feature>
<feature type="site" description="Cleavage; by viral protease NS3" evidence="1">
    <location>
        <begin position="2236"/>
        <end position="2237"/>
    </location>
</feature>
<feature type="site" description="Cleavage; by host signal peptidase" evidence="1">
    <location>
        <begin position="2259"/>
        <end position="2260"/>
    </location>
</feature>
<feature type="site" description="Cleavage; by viral protease NS3" evidence="1">
    <location>
        <begin position="2510"/>
        <end position="2511"/>
    </location>
</feature>
<feature type="site" description="mRNA cap binding" evidence="17">
    <location>
        <position position="2523"/>
    </location>
</feature>
<feature type="site" description="mRNA cap binding; via carbonyl oxygen" evidence="17">
    <location>
        <position position="2526"/>
    </location>
</feature>
<feature type="site" description="mRNA cap binding" evidence="17">
    <location>
        <position position="2527"/>
    </location>
</feature>
<feature type="site" description="mRNA cap binding; via carbonyl oxygen" evidence="17">
    <location>
        <position position="2529"/>
    </location>
</feature>
<feature type="site" description="mRNA cap binding" evidence="17">
    <location>
        <position position="2534"/>
    </location>
</feature>
<feature type="site" description="mRNA cap binding" evidence="17">
    <location>
        <position position="2538"/>
    </location>
</feature>
<feature type="site" description="Essential for 2'-O-methyltransferase activity" evidence="17">
    <location>
        <position position="2571"/>
    </location>
</feature>
<feature type="site" description="Essential for 2'-O-methyltransferase and N-7 methyltransferase activity" evidence="17">
    <location>
        <position position="2656"/>
    </location>
</feature>
<feature type="site" description="mRNA cap binding" evidence="17">
    <location>
        <position position="2660"/>
    </location>
</feature>
<feature type="site" description="Essential for 2'-O-methyltransferase activity" evidence="17">
    <location>
        <position position="2693"/>
    </location>
</feature>
<feature type="site" description="mRNA cap binding" evidence="17">
    <location>
        <position position="2724"/>
    </location>
</feature>
<feature type="site" description="mRNA cap binding" evidence="17">
    <location>
        <position position="2726"/>
    </location>
</feature>
<feature type="site" description="Essential for 2'-O-methyltransferase activity" evidence="17">
    <location>
        <position position="2729"/>
    </location>
</feature>
<feature type="modified residue" description="N6-acetyllysine; by host" evidence="7">
    <location>
        <position position="1883"/>
    </location>
</feature>
<feature type="modified residue" description="Phosphoserine" evidence="1">
    <location>
        <position position="2566"/>
    </location>
</feature>
<feature type="glycosylation site" description="N-linked (GlcNAc...) asparagine; by host" evidence="11">
    <location>
        <position position="144"/>
    </location>
</feature>
<feature type="glycosylation site" description="N-linked (GlcNAc...) asparagine; by host" evidence="4 11">
    <location>
        <position position="434"/>
    </location>
</feature>
<feature type="glycosylation site" description="N-linked (GlcNAc...) asparagine; by host" evidence="11">
    <location>
        <position position="861"/>
    </location>
</feature>
<feature type="glycosylation site" description="N-linked (GlcNAc...) asparagine; by host" evidence="11">
    <location>
        <position position="983"/>
    </location>
</feature>
<feature type="glycosylation site" description="N-linked (GlcNAc...) asparagine; by host" evidence="11">
    <location>
        <position position="999"/>
    </location>
</feature>
<feature type="disulfide bond" evidence="4">
    <location>
        <begin position="283"/>
        <end position="310"/>
    </location>
</feature>
<feature type="disulfide bond" evidence="5">
    <location>
        <begin position="340"/>
        <end position="401"/>
    </location>
</feature>
<feature type="disulfide bond" evidence="4">
    <location>
        <begin position="340"/>
        <end position="396"/>
    </location>
</feature>
<feature type="disulfide bond" evidence="4">
    <location>
        <begin position="354"/>
        <end position="385"/>
    </location>
</feature>
<feature type="disulfide bond" evidence="4">
    <location>
        <begin position="372"/>
        <end position="401"/>
    </location>
</feature>
<feature type="disulfide bond" evidence="5">
    <location>
        <begin position="372"/>
        <end position="396"/>
    </location>
</feature>
<feature type="disulfide bond" evidence="4">
    <location>
        <begin position="466"/>
        <end position="570"/>
    </location>
</feature>
<feature type="disulfide bond" evidence="4">
    <location>
        <begin position="587"/>
        <end position="618"/>
    </location>
</feature>
<feature type="disulfide bond" evidence="5">
    <location>
        <begin position="780"/>
        <end position="791"/>
    </location>
</feature>
<feature type="disulfide bond" evidence="5">
    <location>
        <begin position="831"/>
        <end position="920"/>
    </location>
</feature>
<feature type="disulfide bond" evidence="5">
    <location>
        <begin position="955"/>
        <end position="1000"/>
    </location>
</feature>
<feature type="disulfide bond" evidence="5">
    <location>
        <begin position="1057"/>
        <end position="1106"/>
    </location>
</feature>
<feature type="disulfide bond" evidence="5">
    <location>
        <begin position="1068"/>
        <end position="1090"/>
    </location>
</feature>
<feature type="disulfide bond" evidence="5">
    <location>
        <begin position="1089"/>
        <end position="1093"/>
    </location>
</feature>
<feature type="sequence conflict" description="In Ref. 3; CAA27500." evidence="20" ref="3">
    <original>W</original>
    <variation>S</variation>
    <location>
        <position position="381"/>
    </location>
</feature>
<feature type="helix" evidence="22">
    <location>
        <begin position="282"/>
        <end position="284"/>
    </location>
</feature>
<feature type="strand" evidence="22">
    <location>
        <begin position="290"/>
        <end position="292"/>
    </location>
</feature>
<feature type="strand" evidence="22">
    <location>
        <begin position="300"/>
        <end position="306"/>
    </location>
</feature>
<feature type="strand" evidence="22">
    <location>
        <begin position="311"/>
        <end position="315"/>
    </location>
</feature>
<feature type="strand" evidence="22">
    <location>
        <begin position="318"/>
        <end position="332"/>
    </location>
</feature>
<feature type="strand" evidence="22">
    <location>
        <begin position="334"/>
        <end position="353"/>
    </location>
</feature>
<feature type="helix" evidence="22">
    <location>
        <begin position="363"/>
        <end position="365"/>
    </location>
</feature>
<feature type="strand" evidence="22">
    <location>
        <begin position="370"/>
        <end position="379"/>
    </location>
</feature>
<feature type="turn" evidence="22">
    <location>
        <begin position="381"/>
        <end position="384"/>
    </location>
</feature>
<feature type="strand" evidence="22">
    <location>
        <begin position="389"/>
        <end position="401"/>
    </location>
</feature>
<feature type="strand" evidence="22">
    <location>
        <begin position="406"/>
        <end position="411"/>
    </location>
</feature>
<feature type="turn" evidence="22">
    <location>
        <begin position="414"/>
        <end position="416"/>
    </location>
</feature>
<feature type="strand" evidence="22">
    <location>
        <begin position="418"/>
        <end position="425"/>
    </location>
</feature>
<feature type="strand" evidence="22">
    <location>
        <begin position="441"/>
        <end position="445"/>
    </location>
</feature>
<feature type="strand" evidence="22">
    <location>
        <begin position="452"/>
        <end position="455"/>
    </location>
</feature>
<feature type="helix" evidence="22">
    <location>
        <begin position="457"/>
        <end position="459"/>
    </location>
</feature>
<feature type="strand" evidence="22">
    <location>
        <begin position="460"/>
        <end position="467"/>
    </location>
</feature>
<feature type="helix" evidence="22">
    <location>
        <begin position="468"/>
        <end position="470"/>
    </location>
</feature>
<feature type="helix" evidence="22">
    <location>
        <begin position="474"/>
        <end position="476"/>
    </location>
</feature>
<feature type="strand" evidence="22">
    <location>
        <begin position="477"/>
        <end position="481"/>
    </location>
</feature>
<feature type="strand" evidence="22">
    <location>
        <begin position="491"/>
        <end position="496"/>
    </location>
</feature>
<feature type="helix" evidence="22">
    <location>
        <begin position="497"/>
        <end position="502"/>
    </location>
</feature>
<feature type="helix" evidence="22">
    <location>
        <begin position="518"/>
        <end position="521"/>
    </location>
</feature>
<feature type="strand" evidence="22">
    <location>
        <begin position="522"/>
        <end position="524"/>
    </location>
</feature>
<feature type="strand" evidence="22">
    <location>
        <begin position="534"/>
        <end position="536"/>
    </location>
</feature>
<feature type="helix" evidence="22">
    <location>
        <begin position="541"/>
        <end position="547"/>
    </location>
</feature>
<feature type="strand" evidence="22">
    <location>
        <begin position="553"/>
        <end position="557"/>
    </location>
</feature>
<feature type="strand" evidence="22">
    <location>
        <begin position="560"/>
        <end position="565"/>
    </location>
</feature>
<feature type="strand" evidence="22">
    <location>
        <begin position="567"/>
        <end position="577"/>
    </location>
</feature>
<feature type="strand" evidence="21">
    <location>
        <begin position="591"/>
        <end position="600"/>
    </location>
</feature>
<feature type="strand" evidence="21">
    <location>
        <begin position="602"/>
        <end position="612"/>
    </location>
</feature>
<feature type="strand" evidence="21">
    <location>
        <begin position="614"/>
        <end position="619"/>
    </location>
</feature>
<feature type="strand" evidence="21">
    <location>
        <begin position="622"/>
        <end position="626"/>
    </location>
</feature>
<feature type="strand" evidence="21">
    <location>
        <begin position="636"/>
        <end position="641"/>
    </location>
</feature>
<feature type="strand" evidence="21">
    <location>
        <begin position="643"/>
        <end position="645"/>
    </location>
</feature>
<feature type="strand" evidence="21">
    <location>
        <begin position="651"/>
        <end position="655"/>
    </location>
</feature>
<feature type="strand" evidence="21">
    <location>
        <begin position="658"/>
        <end position="665"/>
    </location>
</feature>
<feature type="strand" evidence="21">
    <location>
        <begin position="668"/>
        <end position="674"/>
    </location>
</feature>
<evidence type="ECO:0000250" key="1">
    <source>
        <dbReference type="UniProtKB" id="P03314"/>
    </source>
</evidence>
<evidence type="ECO:0000250" key="2">
    <source>
        <dbReference type="UniProtKB" id="P06935"/>
    </source>
</evidence>
<evidence type="ECO:0000250" key="3">
    <source>
        <dbReference type="UniProtKB" id="P14335"/>
    </source>
</evidence>
<evidence type="ECO:0000250" key="4">
    <source>
        <dbReference type="UniProtKB" id="P14336"/>
    </source>
</evidence>
<evidence type="ECO:0000250" key="5">
    <source>
        <dbReference type="UniProtKB" id="P17763"/>
    </source>
</evidence>
<evidence type="ECO:0000250" key="6">
    <source>
        <dbReference type="UniProtKB" id="Q01299"/>
    </source>
</evidence>
<evidence type="ECO:0000250" key="7">
    <source>
        <dbReference type="UniProtKB" id="Q32ZE1"/>
    </source>
</evidence>
<evidence type="ECO:0000250" key="8">
    <source>
        <dbReference type="UniProtKB" id="Q6YMS4"/>
    </source>
</evidence>
<evidence type="ECO:0000250" key="9">
    <source>
        <dbReference type="UniProtKB" id="Q9Q6P4"/>
    </source>
</evidence>
<evidence type="ECO:0000255" key="10"/>
<evidence type="ECO:0000255" key="11">
    <source>
        <dbReference type="PROSITE-ProRule" id="PRU00498"/>
    </source>
</evidence>
<evidence type="ECO:0000255" key="12">
    <source>
        <dbReference type="PROSITE-ProRule" id="PRU00539"/>
    </source>
</evidence>
<evidence type="ECO:0000255" key="13">
    <source>
        <dbReference type="PROSITE-ProRule" id="PRU00541"/>
    </source>
</evidence>
<evidence type="ECO:0000255" key="14">
    <source>
        <dbReference type="PROSITE-ProRule" id="PRU00542"/>
    </source>
</evidence>
<evidence type="ECO:0000255" key="15">
    <source>
        <dbReference type="PROSITE-ProRule" id="PRU00859"/>
    </source>
</evidence>
<evidence type="ECO:0000255" key="16">
    <source>
        <dbReference type="PROSITE-ProRule" id="PRU00860"/>
    </source>
</evidence>
<evidence type="ECO:0000255" key="17">
    <source>
        <dbReference type="PROSITE-ProRule" id="PRU00924"/>
    </source>
</evidence>
<evidence type="ECO:0000256" key="18">
    <source>
        <dbReference type="SAM" id="MobiDB-lite"/>
    </source>
</evidence>
<evidence type="ECO:0000269" key="19">
    <source>
    </source>
</evidence>
<evidence type="ECO:0000305" key="20"/>
<evidence type="ECO:0007829" key="21">
    <source>
        <dbReference type="PDB" id="7LSE"/>
    </source>
</evidence>
<evidence type="ECO:0007829" key="22">
    <source>
        <dbReference type="PDB" id="8R8L"/>
    </source>
</evidence>
<accession>P07720</accession>
<accession>P07721</accession>
<accession>Q88475</accession>
<accession>Q88476</accession>
<accession>Q88477</accession>
<accession>Q88478</accession>
<accession>Q88479</accession>
<accession>Q88877</accession>
<accession>Q88878</accession>
<accession>Q88879</accession>
<dbReference type="EC" id="3.4.21.91"/>
<dbReference type="EC" id="3.6.1.15"/>
<dbReference type="EC" id="3.6.4.13"/>
<dbReference type="EC" id="2.1.1.56" evidence="17"/>
<dbReference type="EC" id="2.1.1.57" evidence="17"/>
<dbReference type="EC" id="2.7.7.48" evidence="12"/>
<dbReference type="EMBL" id="X07755">
    <property type="protein sequence ID" value="CAA30581.1"/>
    <property type="molecule type" value="Genomic_RNA"/>
</dbReference>
<dbReference type="EMBL" id="X03870">
    <property type="protein sequence ID" value="CAA27500.1"/>
    <property type="molecule type" value="Genomic_RNA"/>
</dbReference>
<dbReference type="EMBL" id="X03870">
    <property type="protein sequence ID" value="CAA27501.1"/>
    <property type="status" value="ALT_SEQ"/>
    <property type="molecule type" value="Genomic_RNA"/>
</dbReference>
<dbReference type="EMBL" id="X03870">
    <property type="protein sequence ID" value="CAA27502.1"/>
    <property type="status" value="ALT_SEQ"/>
    <property type="molecule type" value="Genomic_RNA"/>
</dbReference>
<dbReference type="EMBL" id="X03870">
    <property type="protein sequence ID" value="CAA27503.1"/>
    <property type="status" value="ALT_SEQ"/>
    <property type="molecule type" value="Genomic_RNA"/>
</dbReference>
<dbReference type="EMBL" id="X03871">
    <property type="protein sequence ID" value="CAA27505.1"/>
    <property type="molecule type" value="Genomic_RNA"/>
</dbReference>
<dbReference type="PIR" id="A33776">
    <property type="entry name" value="GNWVTB"/>
</dbReference>
<dbReference type="PDB" id="1K4R">
    <property type="method" value="EM"/>
    <property type="resolution" value="24.00 A"/>
    <property type="chains" value="A/B/C=281-675"/>
</dbReference>
<dbReference type="PDB" id="7LSE">
    <property type="method" value="X-ray"/>
    <property type="resolution" value="2.35 A"/>
    <property type="chains" value="E=581-677"/>
</dbReference>
<dbReference type="PDB" id="8QRH">
    <property type="method" value="EM"/>
    <property type="resolution" value="3.60 A"/>
    <property type="chains" value="A/B/C=281-772"/>
</dbReference>
<dbReference type="PDB" id="8R2L">
    <property type="method" value="X-ray"/>
    <property type="resolution" value="3.20 A"/>
    <property type="chains" value="AAA=282-675"/>
</dbReference>
<dbReference type="PDB" id="8R8L">
    <property type="method" value="EM"/>
    <property type="resolution" value="3.03 A"/>
    <property type="chains" value="A/B/C=281-676"/>
</dbReference>
<dbReference type="PDBsum" id="1K4R"/>
<dbReference type="PDBsum" id="7LSE"/>
<dbReference type="PDBsum" id="8QRH"/>
<dbReference type="PDBsum" id="8R2L"/>
<dbReference type="PDBsum" id="8R8L"/>
<dbReference type="EMDB" id="EMD-19003"/>
<dbReference type="SMR" id="P07720"/>
<dbReference type="Proteomes" id="UP000007401">
    <property type="component" value="Segment"/>
</dbReference>
<dbReference type="GO" id="GO:0005576">
    <property type="term" value="C:extracellular region"/>
    <property type="evidence" value="ECO:0007669"/>
    <property type="project" value="UniProtKB-SubCell"/>
</dbReference>
<dbReference type="GO" id="GO:0044167">
    <property type="term" value="C:host cell endoplasmic reticulum membrane"/>
    <property type="evidence" value="ECO:0007669"/>
    <property type="project" value="UniProtKB-SubCell"/>
</dbReference>
<dbReference type="GO" id="GO:0042025">
    <property type="term" value="C:host cell nucleus"/>
    <property type="evidence" value="ECO:0007669"/>
    <property type="project" value="UniProtKB-SubCell"/>
</dbReference>
<dbReference type="GO" id="GO:0044220">
    <property type="term" value="C:host cell perinuclear region of cytoplasm"/>
    <property type="evidence" value="ECO:0007669"/>
    <property type="project" value="UniProtKB-SubCell"/>
</dbReference>
<dbReference type="GO" id="GO:0016020">
    <property type="term" value="C:membrane"/>
    <property type="evidence" value="ECO:0007669"/>
    <property type="project" value="UniProtKB-KW"/>
</dbReference>
<dbReference type="GO" id="GO:0019028">
    <property type="term" value="C:viral capsid"/>
    <property type="evidence" value="ECO:0007669"/>
    <property type="project" value="UniProtKB-KW"/>
</dbReference>
<dbReference type="GO" id="GO:0019031">
    <property type="term" value="C:viral envelope"/>
    <property type="evidence" value="ECO:0007669"/>
    <property type="project" value="UniProtKB-KW"/>
</dbReference>
<dbReference type="GO" id="GO:0055036">
    <property type="term" value="C:virion membrane"/>
    <property type="evidence" value="ECO:0007669"/>
    <property type="project" value="UniProtKB-SubCell"/>
</dbReference>
<dbReference type="GO" id="GO:0005524">
    <property type="term" value="F:ATP binding"/>
    <property type="evidence" value="ECO:0007669"/>
    <property type="project" value="UniProtKB-KW"/>
</dbReference>
<dbReference type="GO" id="GO:0016887">
    <property type="term" value="F:ATP hydrolysis activity"/>
    <property type="evidence" value="ECO:0007669"/>
    <property type="project" value="RHEA"/>
</dbReference>
<dbReference type="GO" id="GO:0003725">
    <property type="term" value="F:double-stranded RNA binding"/>
    <property type="evidence" value="ECO:0007669"/>
    <property type="project" value="InterPro"/>
</dbReference>
<dbReference type="GO" id="GO:0046872">
    <property type="term" value="F:metal ion binding"/>
    <property type="evidence" value="ECO:0007669"/>
    <property type="project" value="UniProtKB-KW"/>
</dbReference>
<dbReference type="GO" id="GO:0004483">
    <property type="term" value="F:mRNA (nucleoside-2'-O-)-methyltransferase activity"/>
    <property type="evidence" value="ECO:0007669"/>
    <property type="project" value="UniProtKB-EC"/>
</dbReference>
<dbReference type="GO" id="GO:0004482">
    <property type="term" value="F:mRNA 5'-cap (guanine-N7-)-methyltransferase activity"/>
    <property type="evidence" value="ECO:0007669"/>
    <property type="project" value="UniProtKB-EC"/>
</dbReference>
<dbReference type="GO" id="GO:0046983">
    <property type="term" value="F:protein dimerization activity"/>
    <property type="evidence" value="ECO:0007669"/>
    <property type="project" value="InterPro"/>
</dbReference>
<dbReference type="GO" id="GO:0003724">
    <property type="term" value="F:RNA helicase activity"/>
    <property type="evidence" value="ECO:0007669"/>
    <property type="project" value="UniProtKB-EC"/>
</dbReference>
<dbReference type="GO" id="GO:0003968">
    <property type="term" value="F:RNA-directed RNA polymerase activity"/>
    <property type="evidence" value="ECO:0007669"/>
    <property type="project" value="UniProtKB-KW"/>
</dbReference>
<dbReference type="GO" id="GO:0004252">
    <property type="term" value="F:serine-type endopeptidase activity"/>
    <property type="evidence" value="ECO:0007669"/>
    <property type="project" value="InterPro"/>
</dbReference>
<dbReference type="GO" id="GO:0005198">
    <property type="term" value="F:structural molecule activity"/>
    <property type="evidence" value="ECO:0007669"/>
    <property type="project" value="InterPro"/>
</dbReference>
<dbReference type="GO" id="GO:0075512">
    <property type="term" value="P:clathrin-dependent endocytosis of virus by host cell"/>
    <property type="evidence" value="ECO:0007669"/>
    <property type="project" value="UniProtKB-KW"/>
</dbReference>
<dbReference type="GO" id="GO:0039654">
    <property type="term" value="P:fusion of virus membrane with host endosome membrane"/>
    <property type="evidence" value="ECO:0007669"/>
    <property type="project" value="UniProtKB-KW"/>
</dbReference>
<dbReference type="GO" id="GO:0006508">
    <property type="term" value="P:proteolysis"/>
    <property type="evidence" value="ECO:0007669"/>
    <property type="project" value="UniProtKB-KW"/>
</dbReference>
<dbReference type="GO" id="GO:0039520">
    <property type="term" value="P:symbiont-mediated activation of host autophagy"/>
    <property type="evidence" value="ECO:0007669"/>
    <property type="project" value="UniProtKB-KW"/>
</dbReference>
<dbReference type="GO" id="GO:0052170">
    <property type="term" value="P:symbiont-mediated suppression of host innate immune response"/>
    <property type="evidence" value="ECO:0007669"/>
    <property type="project" value="UniProtKB-KW"/>
</dbReference>
<dbReference type="GO" id="GO:0039563">
    <property type="term" value="P:symbiont-mediated suppression of host JAK-STAT cascade via inhibition of STAT1 activity"/>
    <property type="evidence" value="ECO:0007669"/>
    <property type="project" value="UniProtKB-KW"/>
</dbReference>
<dbReference type="GO" id="GO:0039564">
    <property type="term" value="P:symbiont-mediated suppression of host JAK-STAT cascade via inhibition of STAT2 activity"/>
    <property type="evidence" value="ECO:0007669"/>
    <property type="project" value="UniProtKB-KW"/>
</dbReference>
<dbReference type="GO" id="GO:0039502">
    <property type="term" value="P:symbiont-mediated suppression of host type I interferon-mediated signaling pathway"/>
    <property type="evidence" value="ECO:0007669"/>
    <property type="project" value="UniProtKB-KW"/>
</dbReference>
<dbReference type="GO" id="GO:0039694">
    <property type="term" value="P:viral RNA genome replication"/>
    <property type="evidence" value="ECO:0007669"/>
    <property type="project" value="InterPro"/>
</dbReference>
<dbReference type="GO" id="GO:0019062">
    <property type="term" value="P:virion attachment to host cell"/>
    <property type="evidence" value="ECO:0007669"/>
    <property type="project" value="UniProtKB-KW"/>
</dbReference>
<dbReference type="CDD" id="cd20761">
    <property type="entry name" value="capping_2-OMTase_Flaviviridae"/>
    <property type="match status" value="1"/>
</dbReference>
<dbReference type="CDD" id="cd17931">
    <property type="entry name" value="DEXHc_viral_Ns3"/>
    <property type="match status" value="1"/>
</dbReference>
<dbReference type="CDD" id="cd12149">
    <property type="entry name" value="Flavi_E_C"/>
    <property type="match status" value="1"/>
</dbReference>
<dbReference type="CDD" id="cd23204">
    <property type="entry name" value="Flavivirus_RdRp"/>
    <property type="match status" value="1"/>
</dbReference>
<dbReference type="FunFam" id="1.20.1280.260:FF:000001">
    <property type="entry name" value="Envelope glycoprotein"/>
    <property type="match status" value="1"/>
</dbReference>
<dbReference type="FunFam" id="1.10.8.970:FF:000005">
    <property type="entry name" value="Genome polyprotein"/>
    <property type="match status" value="1"/>
</dbReference>
<dbReference type="FunFam" id="2.40.10.120:FF:000016">
    <property type="entry name" value="Genome polyprotein"/>
    <property type="match status" value="1"/>
</dbReference>
<dbReference type="FunFam" id="3.30.70.2840:FF:000004">
    <property type="entry name" value="Genome polyprotein"/>
    <property type="match status" value="1"/>
</dbReference>
<dbReference type="Gene3D" id="1.10.260.90">
    <property type="match status" value="1"/>
</dbReference>
<dbReference type="Gene3D" id="1.20.1280.260">
    <property type="match status" value="1"/>
</dbReference>
<dbReference type="Gene3D" id="2.40.10.120">
    <property type="match status" value="1"/>
</dbReference>
<dbReference type="Gene3D" id="2.60.40.350">
    <property type="match status" value="1"/>
</dbReference>
<dbReference type="Gene3D" id="1.10.8.970">
    <property type="entry name" value="Flavivirus envelope glycoprotein M-like"/>
    <property type="match status" value="1"/>
</dbReference>
<dbReference type="Gene3D" id="2.60.260.50">
    <property type="entry name" value="Flavivirus polyprotein propeptide domain"/>
    <property type="match status" value="1"/>
</dbReference>
<dbReference type="Gene3D" id="3.30.70.2840">
    <property type="entry name" value="Flavivirus RNA-directed RNA polymerase, thumb domain"/>
    <property type="match status" value="3"/>
</dbReference>
<dbReference type="Gene3D" id="3.40.50.300">
    <property type="entry name" value="P-loop containing nucleotide triphosphate hydrolases"/>
    <property type="match status" value="2"/>
</dbReference>
<dbReference type="Gene3D" id="2.60.98.10">
    <property type="entry name" value="Tick-borne Encephalitis virus Glycoprotein, domain 1"/>
    <property type="match status" value="1"/>
</dbReference>
<dbReference type="Gene3D" id="3.40.50.150">
    <property type="entry name" value="Vaccinia Virus protein VP39"/>
    <property type="match status" value="1"/>
</dbReference>
<dbReference type="Gene3D" id="3.30.67.10">
    <property type="entry name" value="Viral Envelope Glycoprotein, domain 2"/>
    <property type="match status" value="1"/>
</dbReference>
<dbReference type="Gene3D" id="3.30.387.10">
    <property type="entry name" value="Viral Envelope Glycoprotein, domain 3"/>
    <property type="match status" value="1"/>
</dbReference>
<dbReference type="InterPro" id="IPR043502">
    <property type="entry name" value="DNA/RNA_pol_sf"/>
</dbReference>
<dbReference type="InterPro" id="IPR000069">
    <property type="entry name" value="Env_glycoprot_M_flavivir"/>
</dbReference>
<dbReference type="InterPro" id="IPR038302">
    <property type="entry name" value="Env_glycoprot_M_sf_flavivir"/>
</dbReference>
<dbReference type="InterPro" id="IPR013755">
    <property type="entry name" value="Flav_gly_cen_dom_subdom1"/>
</dbReference>
<dbReference type="InterPro" id="IPR001122">
    <property type="entry name" value="Flavi_capsidC"/>
</dbReference>
<dbReference type="InterPro" id="IPR011492">
    <property type="entry name" value="Flavi_DEAD"/>
</dbReference>
<dbReference type="InterPro" id="IPR027287">
    <property type="entry name" value="Flavi_E_Ig-like"/>
</dbReference>
<dbReference type="InterPro" id="IPR026470">
    <property type="entry name" value="Flavi_E_Stem/Anchor_dom"/>
</dbReference>
<dbReference type="InterPro" id="IPR038345">
    <property type="entry name" value="Flavi_E_Stem/Anchor_dom_sf"/>
</dbReference>
<dbReference type="InterPro" id="IPR011998">
    <property type="entry name" value="Flavi_Glycoprot_E_cen/dimer"/>
</dbReference>
<dbReference type="InterPro" id="IPR001157">
    <property type="entry name" value="Flavi_NS1"/>
</dbReference>
<dbReference type="InterPro" id="IPR000752">
    <property type="entry name" value="Flavi_NS2A"/>
</dbReference>
<dbReference type="InterPro" id="IPR000487">
    <property type="entry name" value="Flavi_NS2B"/>
</dbReference>
<dbReference type="InterPro" id="IPR001850">
    <property type="entry name" value="Flavi_NS3_S7"/>
</dbReference>
<dbReference type="InterPro" id="IPR000404">
    <property type="entry name" value="Flavi_NS4A"/>
</dbReference>
<dbReference type="InterPro" id="IPR001528">
    <property type="entry name" value="Flavi_NS4B"/>
</dbReference>
<dbReference type="InterPro" id="IPR046811">
    <property type="entry name" value="Flavi_NS5_thumb"/>
</dbReference>
<dbReference type="InterPro" id="IPR002535">
    <property type="entry name" value="Flavi_propep"/>
</dbReference>
<dbReference type="InterPro" id="IPR038688">
    <property type="entry name" value="Flavi_propep_sf"/>
</dbReference>
<dbReference type="InterPro" id="IPR047530">
    <property type="entry name" value="Flavi_RdRp"/>
</dbReference>
<dbReference type="InterPro" id="IPR000208">
    <property type="entry name" value="Flavi_RdRp_fingers/palm"/>
</dbReference>
<dbReference type="InterPro" id="IPR000336">
    <property type="entry name" value="Flavivir/Alphavir_Ig-like_sf"/>
</dbReference>
<dbReference type="InterPro" id="IPR014412">
    <property type="entry name" value="Gen_Poly_FLV"/>
</dbReference>
<dbReference type="InterPro" id="IPR036253">
    <property type="entry name" value="Glycoprot_cen/dimer_sf"/>
</dbReference>
<dbReference type="InterPro" id="IPR038055">
    <property type="entry name" value="Glycoprot_E_dimer_dom"/>
</dbReference>
<dbReference type="InterPro" id="IPR013756">
    <property type="entry name" value="GlyE_cen_dom_subdom2"/>
</dbReference>
<dbReference type="InterPro" id="IPR014001">
    <property type="entry name" value="Helicase_ATP-bd"/>
</dbReference>
<dbReference type="InterPro" id="IPR001650">
    <property type="entry name" value="Helicase_C-like"/>
</dbReference>
<dbReference type="InterPro" id="IPR014756">
    <property type="entry name" value="Ig_E-set"/>
</dbReference>
<dbReference type="InterPro" id="IPR026490">
    <property type="entry name" value="mRNA_cap_0/1_MeTrfase"/>
</dbReference>
<dbReference type="InterPro" id="IPR049486">
    <property type="entry name" value="NS3-hel_C_flaviviridae"/>
</dbReference>
<dbReference type="InterPro" id="IPR027417">
    <property type="entry name" value="P-loop_NTPase"/>
</dbReference>
<dbReference type="InterPro" id="IPR009003">
    <property type="entry name" value="Peptidase_S1_PA"/>
</dbReference>
<dbReference type="InterPro" id="IPR007094">
    <property type="entry name" value="RNA-dir_pol_PSvirus"/>
</dbReference>
<dbReference type="InterPro" id="IPR002877">
    <property type="entry name" value="RNA_MeTrfase_FtsJ_dom"/>
</dbReference>
<dbReference type="InterPro" id="IPR029063">
    <property type="entry name" value="SAM-dependent_MTases_sf"/>
</dbReference>
<dbReference type="NCBIfam" id="TIGR04240">
    <property type="entry name" value="flavi_E_stem"/>
    <property type="match status" value="1"/>
</dbReference>
<dbReference type="Pfam" id="PF20907">
    <property type="entry name" value="Flav_NS3-hel_C"/>
    <property type="match status" value="1"/>
</dbReference>
<dbReference type="Pfam" id="PF01003">
    <property type="entry name" value="Flavi_capsid"/>
    <property type="match status" value="1"/>
</dbReference>
<dbReference type="Pfam" id="PF07652">
    <property type="entry name" value="Flavi_DEAD"/>
    <property type="match status" value="1"/>
</dbReference>
<dbReference type="Pfam" id="PF21659">
    <property type="entry name" value="Flavi_E_stem"/>
    <property type="match status" value="1"/>
</dbReference>
<dbReference type="Pfam" id="PF02832">
    <property type="entry name" value="Flavi_glycop_C"/>
    <property type="match status" value="1"/>
</dbReference>
<dbReference type="Pfam" id="PF00869">
    <property type="entry name" value="Flavi_glycoprot"/>
    <property type="match status" value="1"/>
</dbReference>
<dbReference type="Pfam" id="PF01004">
    <property type="entry name" value="Flavi_M"/>
    <property type="match status" value="1"/>
</dbReference>
<dbReference type="Pfam" id="PF00948">
    <property type="entry name" value="Flavi_NS1"/>
    <property type="match status" value="1"/>
</dbReference>
<dbReference type="Pfam" id="PF01005">
    <property type="entry name" value="Flavi_NS2A"/>
    <property type="match status" value="1"/>
</dbReference>
<dbReference type="Pfam" id="PF01350">
    <property type="entry name" value="Flavi_NS4A"/>
    <property type="match status" value="1"/>
</dbReference>
<dbReference type="Pfam" id="PF01349">
    <property type="entry name" value="Flavi_NS4B"/>
    <property type="match status" value="1"/>
</dbReference>
<dbReference type="Pfam" id="PF00972">
    <property type="entry name" value="Flavi_NS5"/>
    <property type="match status" value="1"/>
</dbReference>
<dbReference type="Pfam" id="PF20483">
    <property type="entry name" value="Flavi_NS5_thumb"/>
    <property type="match status" value="1"/>
</dbReference>
<dbReference type="Pfam" id="PF01570">
    <property type="entry name" value="Flavi_propep"/>
    <property type="match status" value="1"/>
</dbReference>
<dbReference type="Pfam" id="PF01728">
    <property type="entry name" value="FtsJ"/>
    <property type="match status" value="1"/>
</dbReference>
<dbReference type="Pfam" id="PF00949">
    <property type="entry name" value="Peptidase_S7"/>
    <property type="match status" value="1"/>
</dbReference>
<dbReference type="PIRSF" id="PIRSF003817">
    <property type="entry name" value="Gen_Poly_FLV"/>
    <property type="match status" value="1"/>
</dbReference>
<dbReference type="SMART" id="SM00487">
    <property type="entry name" value="DEXDc"/>
    <property type="match status" value="1"/>
</dbReference>
<dbReference type="SMART" id="SM00490">
    <property type="entry name" value="HELICc"/>
    <property type="match status" value="1"/>
</dbReference>
<dbReference type="SUPFAM" id="SSF56672">
    <property type="entry name" value="DNA/RNA polymerases"/>
    <property type="match status" value="1"/>
</dbReference>
<dbReference type="SUPFAM" id="SSF81296">
    <property type="entry name" value="E set domains"/>
    <property type="match status" value="1"/>
</dbReference>
<dbReference type="SUPFAM" id="SSF52540">
    <property type="entry name" value="P-loop containing nucleoside triphosphate hydrolases"/>
    <property type="match status" value="2"/>
</dbReference>
<dbReference type="SUPFAM" id="SSF53335">
    <property type="entry name" value="S-adenosyl-L-methionine-dependent methyltransferases"/>
    <property type="match status" value="1"/>
</dbReference>
<dbReference type="SUPFAM" id="SSF50494">
    <property type="entry name" value="Trypsin-like serine proteases"/>
    <property type="match status" value="1"/>
</dbReference>
<dbReference type="SUPFAM" id="SSF56983">
    <property type="entry name" value="Viral glycoprotein, central and dimerisation domains"/>
    <property type="match status" value="1"/>
</dbReference>
<dbReference type="PROSITE" id="PS51527">
    <property type="entry name" value="FLAVIVIRUS_NS2B"/>
    <property type="match status" value="1"/>
</dbReference>
<dbReference type="PROSITE" id="PS51528">
    <property type="entry name" value="FLAVIVIRUS_NS3PRO"/>
    <property type="match status" value="1"/>
</dbReference>
<dbReference type="PROSITE" id="PS51192">
    <property type="entry name" value="HELICASE_ATP_BIND_1"/>
    <property type="match status" value="1"/>
</dbReference>
<dbReference type="PROSITE" id="PS51194">
    <property type="entry name" value="HELICASE_CTER"/>
    <property type="match status" value="1"/>
</dbReference>
<dbReference type="PROSITE" id="PS50507">
    <property type="entry name" value="RDRP_SSRNA_POS"/>
    <property type="match status" value="1"/>
</dbReference>
<dbReference type="PROSITE" id="PS51591">
    <property type="entry name" value="RNA_CAP01_NS5_MT"/>
    <property type="match status" value="1"/>
</dbReference>
<organism>
    <name type="scientific">Tick-borne encephalitis virus Far Eastern subtype (strain Sofjin)</name>
    <name type="common">SOFV</name>
    <name type="synonym">Sofjin virus</name>
    <dbReference type="NCBI Taxonomy" id="11087"/>
    <lineage>
        <taxon>Viruses</taxon>
        <taxon>Riboviria</taxon>
        <taxon>Orthornavirae</taxon>
        <taxon>Kitrinoviricota</taxon>
        <taxon>Flasuviricetes</taxon>
        <taxon>Amarillovirales</taxon>
        <taxon>Flaviviridae</taxon>
        <taxon>Orthoflavivirus</taxon>
        <taxon>Orthoflavivirus encephalitidis</taxon>
        <taxon>Tick-borne encephalitis virus</taxon>
    </lineage>
</organism>
<name>POLG_TBEVS</name>